<feature type="chain" id="PRO_0000054044" description="Potassium voltage-gated channel subfamily B member 1">
    <location>
        <begin position="1"/>
        <end position="858"/>
    </location>
</feature>
<feature type="topological domain" description="Cytoplasmic" evidence="2">
    <location>
        <begin position="1"/>
        <end position="186"/>
    </location>
</feature>
<feature type="transmembrane region" description="Helical; Name=Segment S1" evidence="2">
    <location>
        <begin position="187"/>
        <end position="208"/>
    </location>
</feature>
<feature type="topological domain" description="Extracellular" evidence="2">
    <location>
        <begin position="209"/>
        <end position="228"/>
    </location>
</feature>
<feature type="transmembrane region" description="Helical; Name=Segment S2" evidence="2">
    <location>
        <begin position="229"/>
        <end position="250"/>
    </location>
</feature>
<feature type="topological domain" description="Cytoplasmic" evidence="2">
    <location>
        <begin position="251"/>
        <end position="259"/>
    </location>
</feature>
<feature type="transmembrane region" description="Helical; Name=Segment S3" evidence="2">
    <location>
        <begin position="260"/>
        <end position="280"/>
    </location>
</feature>
<feature type="topological domain" description="Extracellular" evidence="2">
    <location>
        <begin position="281"/>
        <end position="294"/>
    </location>
</feature>
<feature type="transmembrane region" description="Helical; Voltage-sensor; Name=Segment S4" evidence="2">
    <location>
        <begin position="295"/>
        <end position="316"/>
    </location>
</feature>
<feature type="topological domain" description="Cytoplasmic" evidence="2">
    <location>
        <begin position="317"/>
        <end position="330"/>
    </location>
</feature>
<feature type="transmembrane region" description="Helical; Name=Segment S5" evidence="2">
    <location>
        <begin position="331"/>
        <end position="351"/>
    </location>
</feature>
<feature type="topological domain" description="Extracellular" evidence="2">
    <location>
        <begin position="352"/>
        <end position="364"/>
    </location>
</feature>
<feature type="intramembrane region" description="Helical; Name=Pore helix" evidence="2">
    <location>
        <begin position="365"/>
        <end position="376"/>
    </location>
</feature>
<feature type="intramembrane region" evidence="2">
    <location>
        <begin position="377"/>
        <end position="384"/>
    </location>
</feature>
<feature type="topological domain" description="Extracellular" evidence="2">
    <location>
        <begin position="385"/>
        <end position="391"/>
    </location>
</feature>
<feature type="transmembrane region" description="Helical; Name=Segment S6" evidence="2">
    <location>
        <begin position="392"/>
        <end position="420"/>
    </location>
</feature>
<feature type="topological domain" description="Cytoplasmic" evidence="2">
    <location>
        <begin position="421"/>
        <end position="858"/>
    </location>
</feature>
<feature type="region of interest" description="Disordered" evidence="5">
    <location>
        <begin position="1"/>
        <end position="21"/>
    </location>
</feature>
<feature type="region of interest" description="Self-association" evidence="1">
    <location>
        <begin position="59"/>
        <end position="75"/>
    </location>
</feature>
<feature type="region of interest" description="Self-association" evidence="1">
    <location>
        <begin position="448"/>
        <end position="481"/>
    </location>
</feature>
<feature type="region of interest" description="Disordered" evidence="5">
    <location>
        <begin position="474"/>
        <end position="524"/>
    </location>
</feature>
<feature type="region of interest" description="Disordered" evidence="5">
    <location>
        <begin position="537"/>
        <end position="574"/>
    </location>
</feature>
<feature type="region of interest" description="Disordered" evidence="5">
    <location>
        <begin position="771"/>
        <end position="803"/>
    </location>
</feature>
<feature type="region of interest" description="Disordered" evidence="5">
    <location>
        <begin position="839"/>
        <end position="858"/>
    </location>
</feature>
<feature type="short sequence motif" description="Selectivity filter" evidence="2">
    <location>
        <begin position="377"/>
        <end position="382"/>
    </location>
</feature>
<feature type="short sequence motif" description="FFAT" evidence="4">
    <location>
        <begin position="590"/>
        <end position="596"/>
    </location>
</feature>
<feature type="compositionally biased region" description="Basic and acidic residues" evidence="5">
    <location>
        <begin position="504"/>
        <end position="516"/>
    </location>
</feature>
<feature type="compositionally biased region" description="Polar residues" evidence="5">
    <location>
        <begin position="537"/>
        <end position="554"/>
    </location>
</feature>
<feature type="compositionally biased region" description="Polar residues" evidence="5">
    <location>
        <begin position="771"/>
        <end position="785"/>
    </location>
</feature>
<feature type="modified residue" description="Phosphoserine" evidence="1">
    <location>
        <position position="15"/>
    </location>
</feature>
<feature type="modified residue" description="Phosphotyrosine; by Src" evidence="1">
    <location>
        <position position="128"/>
    </location>
</feature>
<feature type="modified residue" description="Phosphoserine" evidence="3">
    <location>
        <position position="444"/>
    </location>
</feature>
<feature type="modified residue" description="Phosphoserine" evidence="3">
    <location>
        <position position="457"/>
    </location>
</feature>
<feature type="modified residue" description="Phosphoserine" evidence="1">
    <location>
        <position position="484"/>
    </location>
</feature>
<feature type="modified residue" description="Phosphoserine" evidence="1">
    <location>
        <position position="496"/>
    </location>
</feature>
<feature type="modified residue" description="Phosphoserine" evidence="1">
    <location>
        <position position="503"/>
    </location>
</feature>
<feature type="modified residue" description="Phosphoserine" evidence="1">
    <location>
        <position position="519"/>
    </location>
</feature>
<feature type="modified residue" description="Phosphoserine; by CDK5; in vitro" evidence="1">
    <location>
        <position position="520"/>
    </location>
</feature>
<feature type="modified residue" description="Phosphoserine" evidence="1">
    <location>
        <position position="541"/>
    </location>
</feature>
<feature type="modified residue" description="Phosphoserine" evidence="1">
    <location>
        <position position="567"/>
    </location>
</feature>
<feature type="modified residue" description="Phosphoserine" evidence="1">
    <location>
        <position position="590"/>
    </location>
</feature>
<feature type="modified residue" description="Phosphoserine" evidence="4">
    <location>
        <position position="593"/>
    </location>
</feature>
<feature type="modified residue" description="Phosphoserine; by CDK5" evidence="1">
    <location>
        <position position="607"/>
    </location>
</feature>
<feature type="modified residue" description="Phosphoserine; by CDK5; in vitro" evidence="1">
    <location>
        <position position="656"/>
    </location>
</feature>
<feature type="modified residue" description="Phosphoserine" evidence="1">
    <location>
        <position position="720"/>
    </location>
</feature>
<feature type="modified residue" description="Phosphoserine" evidence="1">
    <location>
        <position position="772"/>
    </location>
</feature>
<feature type="modified residue" description="Phosphoserine" evidence="1">
    <location>
        <position position="800"/>
    </location>
</feature>
<feature type="modified residue" description="Phosphoserine; by CDK5, MAPK14; in vitro" evidence="1">
    <location>
        <position position="805"/>
    </location>
</feature>
<feature type="cross-link" description="Glycyl lysine isopeptide (Lys-Gly) (interchain with G-Cter in SUMO)" evidence="1">
    <location>
        <position position="475"/>
    </location>
</feature>
<evidence type="ECO:0000250" key="1">
    <source>
        <dbReference type="UniProtKB" id="P15387"/>
    </source>
</evidence>
<evidence type="ECO:0000250" key="2">
    <source>
        <dbReference type="UniProtKB" id="P63142"/>
    </source>
</evidence>
<evidence type="ECO:0000250" key="3">
    <source>
        <dbReference type="UniProtKB" id="Q03717"/>
    </source>
</evidence>
<evidence type="ECO:0000250" key="4">
    <source>
        <dbReference type="UniProtKB" id="Q14721"/>
    </source>
</evidence>
<evidence type="ECO:0000256" key="5">
    <source>
        <dbReference type="SAM" id="MobiDB-lite"/>
    </source>
</evidence>
<evidence type="ECO:0000305" key="6"/>
<evidence type="ECO:0000305" key="7">
    <source>
    </source>
</evidence>
<evidence type="ECO:0000305" key="8">
    <source>
    </source>
</evidence>
<name>KCNB1_PIG</name>
<proteinExistence type="evidence at transcript level"/>
<comment type="function">
    <text evidence="1 3 4">Voltage-gated potassium channel that mediates transmembrane potassium transport in excitable membranes, primarily in the brain, but also in the pancreas and cardiovascular system. Contributes to the regulation of the action potential (AP) repolarization, duration and frequency of repetitive AP firing in neurons, muscle cells and endocrine cells and plays a role in homeostatic attenuation of electrical excitability throughout the brain. Also plays a role in the regulation of exocytosis independently of its electrical function. Forms tetrameric potassium-selective channels through which potassium ions pass in accordance with their electrochemical gradient. The channel alternates between opened and closed conformations in response to the voltage difference across the membrane. Homotetrameric channels mediate a delayed-rectifier voltage-dependent outward potassium current that display rapid activation and slow inactivation in response to membrane depolarization. Can form functional homotetrameric and heterotetrameric channels that contain variable proportions of KCNB2; channel properties depend on the type of alpha subunits that are part of the channel. Can also form functional heterotetrameric channels with other alpha subunits that are non-conducting when expressed alone, such as KCNF1, KCNG1, KCNG3, KCNG4, KCNH1, KCNH2, KCNS1, KCNS2, KCNS3 and KCNV1, creating a functionally diverse range of channel complexes (By similarity). Heterotetrameric channel activity formed with KCNS3 show increased current amplitude with the threshold for action potential activation shifted towards more negative values in hypoxic-treated pulmonary artery smooth muscle cells. Channel properties are also modulated by cytoplasmic ancillary beta subunits, such as AMIGO1, KCNE1, KCNE2 and KCNE3, slowing activation and inactivation rate of the delayed rectifier potassium channels. In vivo, membranes probably contain a mixture of heteromeric potassium channel complexes, making it difficult to assign currents observed in intact tissues to any particular potassium channel family member. Major contributor to the delayed-rectifier voltage-gated potassium current in neurons of the central nervous system, sympathetic ganglion neurons, neuroendocrine cells, pancreatic beta cells, cardiomyocytes and smooth muscle. Mediates the major part of the somatodendritic delayed-rectifier potassium current in hippocampal and cortical pyramidal neurons and sympathetic superior cervical ganglion (CGC) neurons that acts to slow down periods of firing, especially during high frequency stimulation. Plays a role in the induction of long-term potentiation (LTP) of neuron excitability in the CA3 layer of the hippocampus. Contributes to the regulation of the glucose-induced amplitude and duration of action potentials in pancreatic beta-cells, hence limiting calcium influx and insulin secretion. Plays a role in the regulation of resting membrane potential and contraction in hypoxia-treated pulmonary artery smooth muscle cells. May contribute to the regulation of the duration of both the action potential of cardiomyocytes and the heart ventricular repolarization QT interval. Contributes to the pronounced pro-apoptotic potassium current surge during neuronal apoptotic cell death in response to oxidative injury. May confer neuroprotection in response to hypoxia/ischemic insults by suppressing pyramidal neurons hyperexcitability in hippocampal and cortical regions. Promotes trafficking of KCNG3, KCNH1 and KCNH2 to the cell surface membrane, presumably by forming heterotetrameric channels with these subunits. Plays a role in the calcium-dependent recruitment and release of fusion-competent vesicles from the soma of neurons, neuroendocrine and glucose-induced pancreatic beta cells by binding key components of the fusion machinery in a pore-independent manner.</text>
</comment>
<comment type="catalytic activity">
    <reaction evidence="4">
        <text>K(+)(in) = K(+)(out)</text>
        <dbReference type="Rhea" id="RHEA:29463"/>
        <dbReference type="ChEBI" id="CHEBI:29103"/>
    </reaction>
</comment>
<comment type="activity regulation">
    <text evidence="7 8">Inhibited by 12.7 nM stromatoxin 1 (ScTx1), a spider venom toxin of the tarantula S.calceata. Inhibited by 42 nM hanatoxin 1 (HaTx1), a spider venom toxin of the tarantula G.spatulata. Modestly sensitive to millimolar levels of tetraethylammonium (TEA). Modestly sensitive to millimolar levels of 4-aminopyridine (4-AP). Completely insensitive to toxins such as dendrotoxin (DTX) and charybdotoxin (CTX).</text>
</comment>
<comment type="biophysicochemical properties">
    <kinetics>
        <text evidence="7 8">Homotetrameric channels expressed in xenopus oocytes or in mammalian non-neuronal cells display delayed-rectifier voltage-dependent potassium currents which are activated during membrane depolarization, i.e within a risetime of more than 20 msec. After that, inactivate very slowly, i.e within more than 5 sec. Their activation requires low threshold potentials at about -20 to -30 mV with a midpoint activation at about 10 mV. For inactivation, the voltage at half-maximal amplitude is about -20 mV. The time constant for recovery after inactivation is about 1.6 sec. Channels have an unitary conductance of about 8 pS. The voltage-dependence of activation and inactivation and other channel characteristics vary depending on the experimental conditions, the expression system, the presence or absence of ancillary subunits and post-translational modifications.</text>
    </kinetics>
</comment>
<comment type="subunit">
    <text evidence="1 3 4">Homotetramer or heterotetramer with KCNB2. Heterotetramer with non-conducting channel-forming alpha subunits such as KCNF1, KCNG1, KCNG3, KCNG4, KCNH1, KCNH2, KCNS1, KCNS2, KCNS3 and KCNV1. Channel activity is regulated by association with ancillary beta subunits such as AMIGO1, KCNE1, KCNE2 and KCNE3. Interacts with KCNV2 (By similarity). Self-associates (via N-terminus and C-terminus); self-association is required to regulate trafficking, gating and C-terminal phosphorylation-dependent modulation of the channel. Interacts (via C-terminus) with STX1A (via C-terminus); this decreases the rate of channel activation and increases the rate of channel inactivation in pancreatic beta cells, also induces neuronal apoptosis in response to oxidative injury as well as pore-independent enhancement of exocytosis in neuroendocrine cells, chromaffin cells, pancreatic beta cells and from the soma of dorsal root ganglia (DRG) neurons. Interacts (via N-terminus) with SNAP25; this decreases the rate of channel inactivation in pancreatic beta cells and also increases interaction during neuronal apoptosis in a N-methyl-D-aspartate receptor (NMDAR)-dependent manner. Interacts (via N-terminus and C-terminus) with VAMP2 (via N-terminus); stimulates channel inactivation rate. Interacts with CREB1; this promotes channel acetylation in response to stimulation by incretin hormones. Interacts (via N-terminus and C-terminus) with MYL12B. Interacts (via N-terminus) with PIAS3; this increases the number of functional channels at the cell surface. Interacts with SUMO1. Interacts (via phosphorylated form) with PTPRE; this reduces phosphorylation and channel activity in heterologous cells. Interacts (via phosphorylated FFAT motif) with VAPA and VAPB (By similarity).</text>
</comment>
<comment type="subcellular location">
    <subcellularLocation>
        <location evidence="1">Cell membrane</location>
    </subcellularLocation>
    <subcellularLocation>
        <location evidence="1">Perikaryon</location>
    </subcellularLocation>
    <subcellularLocation>
        <location evidence="1">Cell projection</location>
        <location evidence="1">Axon</location>
    </subcellularLocation>
    <subcellularLocation>
        <location evidence="1">Cell projection</location>
        <location evidence="1">Dendrite</location>
    </subcellularLocation>
    <subcellularLocation>
        <location>Membrane</location>
        <topology>Multi-pass membrane protein</topology>
    </subcellularLocation>
    <subcellularLocation>
        <location evidence="1">Postsynaptic cell membrane</location>
    </subcellularLocation>
    <subcellularLocation>
        <location evidence="1">Synapse</location>
    </subcellularLocation>
    <subcellularLocation>
        <location evidence="1">Synapse</location>
        <location evidence="1">Synaptosome</location>
    </subcellularLocation>
    <subcellularLocation>
        <location evidence="1">Lateral cell membrane</location>
    </subcellularLocation>
    <subcellularLocation>
        <location evidence="1">Cell membrane</location>
        <location evidence="1">Sarcolemma</location>
    </subcellularLocation>
    <text evidence="1 3 4">Localizes to high-density somatodendritic clusters and non-clustered sites on the surface of neocortical and hippocampal pyramidal neurons in a cortical actin cytoskeleton-dependent manner. Also localizes to high-density clusters in the axon initial segment (AIS), at ankyrin-G-deficient sites, on the surface of neocortical and hippocampal pyramidal neurons. KCNB1-containing AIS clusters localize either in close apposition to smooth endoplasmic reticulum cisternal organelles or with GABA-A receptor-containing synapses of hippocampal and cortical pyramidal neurons, respectively. Localizes to high-density clusters on the cell surface of atrial and ventricular myocytes and at the lateral plasma membrane in epithelial cells. Localizes both to the axial and transverse tubules (T tubule) and sarcolemma in ventricular myocytes. Associated with lipid raft domains. In cortical neurons, apoptotic injuries induce de novo plasma membrane insertion in a SNARE-dependent manner causing an apoptotic potassium current surge.</text>
</comment>
<comment type="domain">
    <text evidence="2">The transmembrane segment S4 functions as a voltage-sensor and is characterized by a series of positively charged amino acids at every third position. Channel opening and closing is effected by a conformation change that affects the position and orientation of the voltage-sensor paddle formed by S3 and S4 within the membrane. A transmembrane electric field that is positive inside would push the positively charged S4 segment outwards, thereby opening the pore, while a field that is negative inside would pull the S4 segment inwards and close the pore. Changes in the position and orientation of S4 are then transmitted to the activation gate formed by the inner helix bundle via the S4-S5 linker region.</text>
</comment>
<comment type="domain">
    <text evidence="1 4">The N-terminal and C-terminal cytoplasmic regions mediate homooligomerization; self-association is required to regulate trafficking, gating and C-terminal phosphorylation-dependent modulation of the channel. The N-terminal cytoplasmic region is important for interaction with other channel-forming alpha subunits and with ancillary beta subunits. The C-terminus is necessary and sufficient for the restricted localization to, and clustering within, both in soma and proximal portions of dendrite of neurons and in lateral membrane of non-neuronal polarized cells. The C-terminus is both necessary and sufficient as a mediator of cholinergic and calcium-stimulated modulation of channel cell membrane clustering localization and activity in hippocampal neurons.</text>
</comment>
<comment type="domain">
    <text evidence="4">The FFAT motif is involved in the interaction with VAPA and VAPB and its phosphorylation regulates these interactions.</text>
</comment>
<comment type="PTM">
    <text evidence="1 3 4">Phosphorylated. Differential C-terminal phosphorylation on a subset of serines allows graded activity-dependent regulation of channel gating in hippocampal neurons. Ser-607 and Tyr-128 are significant sites of voltage-gated regulation through phosphorylation/dephosphorylation activities. Tyr-128 can be phosphorylated by Src and dephosphorylated by cytoplasmic form of the phosphatase PTPRE. CDK5-induced Ser-607 phosphorylation increases in response to acute blockade of neuronal activity. Phosphorylated on Tyr-128 by Src and on Ser-805 by MAPK14/P38MAPK; phosphorylations are necessary and sufficient for an increase in plasma membrane insertion, apoptotic potassium current surge and completion of the neuronal cell death program. Phosphorylated on Ser-520, Ser-607, Ser-656 and Ser-805 by CDK5; phosphorylation is necessary for KCNB1 channel clustering formation. The Ser-607 phosphorylation state differs between KCNB1-containing clusters on the proximal and distal portions of the axon initial segment (AIS). Highly phosphorylated on serine residues in the C-terminal cytoplasmic tail in resting neurons. Phosphorylated in pancreatic beta cells in response to incretin hormones stimulation in a PKA- and RPS6KA5/MSK1-dependent signaling pathway, promoting beta cell survival. Phosphorylation on Ser-567 is reduced during postnatal development with low levels at P2 and P5; levels then increase to reach adult levels by P14. Phosphorylation on Ser-457, Ser-541, Ser-567, Ser-607, Ser-656 and Ser-720 as well as the N-terminal Ser-15 are sensitive to calcineurin-mediated dephosphorylation contributing to the modulation of the voltage-dependent gating properties. Dephosphorylation by phosphatase PTPRE confers neuroprotection by its inhibitory influence on the neuronal apoptotic potassium current surge in a Zn(2+)-dependent manner. Dephosphorylated at Ser-607 by protein phosphatase PPP1CA. Hypoxia-, seizure- or glutamate-induced neuronal activity promote calcium/calcineurin-dependent dephosphorylation resulting in a loss of KCNB1-containing clustering and enhanced channel activity. In response to brain ischemia, Ser-567 and Ser-607 are strongly dephosphorylated while Ser-457 and Ser-720 are less dephosphorylated. In response to brain seizures, phosphorylation levels on Ser-567 and Ser-607 are greatly reduced. Phosphorylated/dephosphorylated by Src or FYN tyrosine-protein kinases and tyrosine phosphatase PTPRE in primary Schwann cells and sciatic nerve tissue. Phosphorylation at Ser-593 of the FFAT motif activates interaction with MOSPD2, VAPA and VAPB (By similarity).</text>
</comment>
<comment type="PTM">
    <text evidence="1">Acetylated. Acetylation occurs in pancreatic beta cells in response to stimulation by incretin hormones in a histone acetyltransferase (HAT)/histone deacetylase (HDAC)-dependent signaling pathway, promoting beta cell survival.</text>
</comment>
<comment type="PTM">
    <text evidence="1 4">Sumoylated on Lys-475, preferentially with SUMO1; sumoylation induces a positive shift in the voltage-dependence of activation and inhibits channel activity. Sumoylation increases the frequency of repetitive action potential firing at the cell surface of hippocampal neurons and decreases its frequency in pancreatic beta cells. Desumoylated by SENP1.</text>
</comment>
<comment type="similarity">
    <text evidence="6">Belongs to the potassium channel family. B (Shab) (TC 1.A.1.2) subfamily. Kv2.1/KCNB1 sub-subfamily.</text>
</comment>
<organism>
    <name type="scientific">Sus scrofa</name>
    <name type="common">Pig</name>
    <dbReference type="NCBI Taxonomy" id="9823"/>
    <lineage>
        <taxon>Eukaryota</taxon>
        <taxon>Metazoa</taxon>
        <taxon>Chordata</taxon>
        <taxon>Craniata</taxon>
        <taxon>Vertebrata</taxon>
        <taxon>Euteleostomi</taxon>
        <taxon>Mammalia</taxon>
        <taxon>Eutheria</taxon>
        <taxon>Laurasiatheria</taxon>
        <taxon>Artiodactyla</taxon>
        <taxon>Suina</taxon>
        <taxon>Suidae</taxon>
        <taxon>Sus</taxon>
    </lineage>
</organism>
<reference key="1">
    <citation type="submission" date="1997-09" db="EMBL/GenBank/DDBJ databases">
        <authorList>
            <person name="Rae J.L."/>
            <person name="Shepard A.R."/>
        </authorList>
    </citation>
    <scope>NUCLEOTIDE SEQUENCE [MRNA]</scope>
    <source>
        <tissue>Lens epithelium</tissue>
    </source>
</reference>
<reference key="2">
    <citation type="journal article" date="1999" name="Ann. N. Y. Acad. Sci.">
        <title>Molecular diversity of K+ channels.</title>
        <authorList>
            <person name="Coetzee W.A."/>
            <person name="Amarillo Y."/>
            <person name="Chiu J."/>
            <person name="Chow A."/>
            <person name="Lau D."/>
            <person name="McCormack T."/>
            <person name="Moreno H."/>
            <person name="Nadal M.S."/>
            <person name="Ozaita A."/>
            <person name="Pountney D."/>
            <person name="Saganich M."/>
            <person name="Vega-Saenz de Miera E."/>
            <person name="Rudy B."/>
        </authorList>
    </citation>
    <scope>REVIEW</scope>
</reference>
<reference key="3">
    <citation type="journal article" date="2005" name="Cell Biochem. Biophys.">
        <title>Molecular determinants of voltage-gated potassium currents in vascular smooth muscle.</title>
        <authorList>
            <person name="Cox R.H."/>
        </authorList>
    </citation>
    <scope>REVIEW</scope>
</reference>
<accession>O18868</accession>
<protein>
    <recommendedName>
        <fullName evidence="4">Potassium voltage-gated channel subfamily B member 1</fullName>
    </recommendedName>
    <alternativeName>
        <fullName evidence="1">Delayed rectifier potassium channel 1</fullName>
        <shortName evidence="1">DRK1</shortName>
    </alternativeName>
    <alternativeName>
        <fullName>Voltage-gated potassium channel subunit Kv2.1</fullName>
    </alternativeName>
</protein>
<keyword id="KW-1003">Cell membrane</keyword>
<keyword id="KW-0966">Cell projection</keyword>
<keyword id="KW-0268">Exocytosis</keyword>
<keyword id="KW-0407">Ion channel</keyword>
<keyword id="KW-0406">Ion transport</keyword>
<keyword id="KW-1017">Isopeptide bond</keyword>
<keyword id="KW-0472">Membrane</keyword>
<keyword id="KW-0597">Phosphoprotein</keyword>
<keyword id="KW-0628">Postsynaptic cell membrane</keyword>
<keyword id="KW-0630">Potassium</keyword>
<keyword id="KW-0631">Potassium channel</keyword>
<keyword id="KW-0633">Potassium transport</keyword>
<keyword id="KW-1185">Reference proteome</keyword>
<keyword id="KW-0770">Synapse</keyword>
<keyword id="KW-0771">Synaptosome</keyword>
<keyword id="KW-0812">Transmembrane</keyword>
<keyword id="KW-1133">Transmembrane helix</keyword>
<keyword id="KW-0813">Transport</keyword>
<keyword id="KW-0832">Ubl conjugation</keyword>
<keyword id="KW-0851">Voltage-gated channel</keyword>
<gene>
    <name evidence="4" type="primary">KCNB1</name>
</gene>
<dbReference type="EMBL" id="AF026006">
    <property type="protein sequence ID" value="AAB88809.1"/>
    <property type="molecule type" value="mRNA"/>
</dbReference>
<dbReference type="RefSeq" id="NP_999383.1">
    <property type="nucleotide sequence ID" value="NM_214218.1"/>
</dbReference>
<dbReference type="SMR" id="O18868"/>
<dbReference type="CORUM" id="O18868"/>
<dbReference type="FunCoup" id="O18868">
    <property type="interactions" value="147"/>
</dbReference>
<dbReference type="STRING" id="9823.ENSSSCP00000032335"/>
<dbReference type="PaxDb" id="9823-ENSSSCP00000007950"/>
<dbReference type="PeptideAtlas" id="O18868"/>
<dbReference type="GeneID" id="397433"/>
<dbReference type="KEGG" id="ssc:397433"/>
<dbReference type="CTD" id="3745"/>
<dbReference type="eggNOG" id="KOG3713">
    <property type="taxonomic scope" value="Eukaryota"/>
</dbReference>
<dbReference type="InParanoid" id="O18868"/>
<dbReference type="OrthoDB" id="296522at2759"/>
<dbReference type="Proteomes" id="UP000008227">
    <property type="component" value="Unplaced"/>
</dbReference>
<dbReference type="Proteomes" id="UP000314985">
    <property type="component" value="Unplaced"/>
</dbReference>
<dbReference type="Proteomes" id="UP000694570">
    <property type="component" value="Unplaced"/>
</dbReference>
<dbReference type="Proteomes" id="UP000694571">
    <property type="component" value="Unplaced"/>
</dbReference>
<dbReference type="Proteomes" id="UP000694720">
    <property type="component" value="Unplaced"/>
</dbReference>
<dbReference type="Proteomes" id="UP000694722">
    <property type="component" value="Unplaced"/>
</dbReference>
<dbReference type="Proteomes" id="UP000694723">
    <property type="component" value="Unplaced"/>
</dbReference>
<dbReference type="Proteomes" id="UP000694724">
    <property type="component" value="Unplaced"/>
</dbReference>
<dbReference type="Proteomes" id="UP000694725">
    <property type="component" value="Unplaced"/>
</dbReference>
<dbReference type="Proteomes" id="UP000694726">
    <property type="component" value="Unplaced"/>
</dbReference>
<dbReference type="Proteomes" id="UP000694727">
    <property type="component" value="Unplaced"/>
</dbReference>
<dbReference type="Proteomes" id="UP000694728">
    <property type="component" value="Unplaced"/>
</dbReference>
<dbReference type="GO" id="GO:0030424">
    <property type="term" value="C:axon"/>
    <property type="evidence" value="ECO:0000250"/>
    <property type="project" value="UniProtKB"/>
</dbReference>
<dbReference type="GO" id="GO:0030425">
    <property type="term" value="C:dendrite"/>
    <property type="evidence" value="ECO:0000250"/>
    <property type="project" value="UniProtKB"/>
</dbReference>
<dbReference type="GO" id="GO:0032590">
    <property type="term" value="C:dendrite membrane"/>
    <property type="evidence" value="ECO:0000318"/>
    <property type="project" value="GO_Central"/>
</dbReference>
<dbReference type="GO" id="GO:0016328">
    <property type="term" value="C:lateral plasma membrane"/>
    <property type="evidence" value="ECO:0007669"/>
    <property type="project" value="UniProtKB-SubCell"/>
</dbReference>
<dbReference type="GO" id="GO:0032809">
    <property type="term" value="C:neuronal cell body membrane"/>
    <property type="evidence" value="ECO:0000250"/>
    <property type="project" value="UniProtKB"/>
</dbReference>
<dbReference type="GO" id="GO:0043204">
    <property type="term" value="C:perikaryon"/>
    <property type="evidence" value="ECO:0000250"/>
    <property type="project" value="UniProtKB"/>
</dbReference>
<dbReference type="GO" id="GO:0005886">
    <property type="term" value="C:plasma membrane"/>
    <property type="evidence" value="ECO:0000250"/>
    <property type="project" value="UniProtKB"/>
</dbReference>
<dbReference type="GO" id="GO:0045211">
    <property type="term" value="C:postsynaptic membrane"/>
    <property type="evidence" value="ECO:0000318"/>
    <property type="project" value="GO_Central"/>
</dbReference>
<dbReference type="GO" id="GO:0042383">
    <property type="term" value="C:sarcolemma"/>
    <property type="evidence" value="ECO:0007669"/>
    <property type="project" value="UniProtKB-SubCell"/>
</dbReference>
<dbReference type="GO" id="GO:0008076">
    <property type="term" value="C:voltage-gated potassium channel complex"/>
    <property type="evidence" value="ECO:0000250"/>
    <property type="project" value="UniProtKB"/>
</dbReference>
<dbReference type="GO" id="GO:0005251">
    <property type="term" value="F:delayed rectifier potassium channel activity"/>
    <property type="evidence" value="ECO:0000250"/>
    <property type="project" value="UniProtKB"/>
</dbReference>
<dbReference type="GO" id="GO:0015459">
    <property type="term" value="F:potassium channel regulator activity"/>
    <property type="evidence" value="ECO:0000318"/>
    <property type="project" value="GO_Central"/>
</dbReference>
<dbReference type="GO" id="GO:0046982">
    <property type="term" value="F:protein heterodimerization activity"/>
    <property type="evidence" value="ECO:0000250"/>
    <property type="project" value="UniProtKB"/>
</dbReference>
<dbReference type="GO" id="GO:0001508">
    <property type="term" value="P:action potential"/>
    <property type="evidence" value="ECO:0000250"/>
    <property type="project" value="UniProtKB"/>
</dbReference>
<dbReference type="GO" id="GO:0071333">
    <property type="term" value="P:cellular response to glucose stimulus"/>
    <property type="evidence" value="ECO:0000250"/>
    <property type="project" value="UniProtKB"/>
</dbReference>
<dbReference type="GO" id="GO:0031669">
    <property type="term" value="P:cellular response to nutrient levels"/>
    <property type="evidence" value="ECO:0000250"/>
    <property type="project" value="UniProtKB"/>
</dbReference>
<dbReference type="GO" id="GO:0042593">
    <property type="term" value="P:glucose homeostasis"/>
    <property type="evidence" value="ECO:0000250"/>
    <property type="project" value="UniProtKB"/>
</dbReference>
<dbReference type="GO" id="GO:0007215">
    <property type="term" value="P:glutamate receptor signaling pathway"/>
    <property type="evidence" value="ECO:0000250"/>
    <property type="project" value="UniProtKB"/>
</dbReference>
<dbReference type="GO" id="GO:0046676">
    <property type="term" value="P:negative regulation of insulin secretion"/>
    <property type="evidence" value="ECO:0000250"/>
    <property type="project" value="UniProtKB"/>
</dbReference>
<dbReference type="GO" id="GO:0045956">
    <property type="term" value="P:positive regulation of calcium ion-dependent exocytosis"/>
    <property type="evidence" value="ECO:0000250"/>
    <property type="project" value="UniProtKB"/>
</dbReference>
<dbReference type="GO" id="GO:0033605">
    <property type="term" value="P:positive regulation of catecholamine secretion"/>
    <property type="evidence" value="ECO:0000250"/>
    <property type="project" value="UniProtKB"/>
</dbReference>
<dbReference type="GO" id="GO:1900454">
    <property type="term" value="P:positive regulation of long-term synaptic depression"/>
    <property type="evidence" value="ECO:0000250"/>
    <property type="project" value="UniProtKB"/>
</dbReference>
<dbReference type="GO" id="GO:0010701">
    <property type="term" value="P:positive regulation of norepinephrine secretion"/>
    <property type="evidence" value="ECO:0000250"/>
    <property type="project" value="UniProtKB"/>
</dbReference>
<dbReference type="GO" id="GO:0090314">
    <property type="term" value="P:positive regulation of protein targeting to membrane"/>
    <property type="evidence" value="ECO:0000250"/>
    <property type="project" value="UniProtKB"/>
</dbReference>
<dbReference type="GO" id="GO:0071805">
    <property type="term" value="P:potassium ion transmembrane transport"/>
    <property type="evidence" value="ECO:0000250"/>
    <property type="project" value="UniProtKB"/>
</dbReference>
<dbReference type="GO" id="GO:0006813">
    <property type="term" value="P:potassium ion transport"/>
    <property type="evidence" value="ECO:0000250"/>
    <property type="project" value="UniProtKB"/>
</dbReference>
<dbReference type="GO" id="GO:0051260">
    <property type="term" value="P:protein homooligomerization"/>
    <property type="evidence" value="ECO:0007669"/>
    <property type="project" value="InterPro"/>
</dbReference>
<dbReference type="GO" id="GO:0072659">
    <property type="term" value="P:protein localization to plasma membrane"/>
    <property type="evidence" value="ECO:0000250"/>
    <property type="project" value="UniProtKB"/>
</dbReference>
<dbReference type="GO" id="GO:0098900">
    <property type="term" value="P:regulation of action potential"/>
    <property type="evidence" value="ECO:0000250"/>
    <property type="project" value="UniProtKB"/>
</dbReference>
<dbReference type="GO" id="GO:2000671">
    <property type="term" value="P:regulation of motor neuron apoptotic process"/>
    <property type="evidence" value="ECO:0000250"/>
    <property type="project" value="UniProtKB"/>
</dbReference>
<dbReference type="GO" id="GO:0006904">
    <property type="term" value="P:vesicle docking involved in exocytosis"/>
    <property type="evidence" value="ECO:0000250"/>
    <property type="project" value="UniProtKB"/>
</dbReference>
<dbReference type="CDD" id="cd18412">
    <property type="entry name" value="BTB_POZ_KCNB2"/>
    <property type="match status" value="1"/>
</dbReference>
<dbReference type="FunFam" id="1.10.287.70:FF:000034">
    <property type="entry name" value="Potassium voltage-gated channel subfamily B member"/>
    <property type="match status" value="1"/>
</dbReference>
<dbReference type="FunFam" id="1.20.120.350:FF:000018">
    <property type="entry name" value="Potassium voltage-gated channel subfamily B member"/>
    <property type="match status" value="1"/>
</dbReference>
<dbReference type="FunFam" id="3.30.710.10:FF:000010">
    <property type="entry name" value="Potassium voltage-gated channel subfamily B member"/>
    <property type="match status" value="1"/>
</dbReference>
<dbReference type="Gene3D" id="1.10.287.70">
    <property type="match status" value="1"/>
</dbReference>
<dbReference type="Gene3D" id="3.30.710.10">
    <property type="entry name" value="Potassium Channel Kv1.1, Chain A"/>
    <property type="match status" value="1"/>
</dbReference>
<dbReference type="Gene3D" id="1.20.120.350">
    <property type="entry name" value="Voltage-gated potassium channels. Chain C"/>
    <property type="match status" value="1"/>
</dbReference>
<dbReference type="InterPro" id="IPR000210">
    <property type="entry name" value="BTB/POZ_dom"/>
</dbReference>
<dbReference type="InterPro" id="IPR005821">
    <property type="entry name" value="Ion_trans_dom"/>
</dbReference>
<dbReference type="InterPro" id="IPR003968">
    <property type="entry name" value="K_chnl_volt-dep_Kv"/>
</dbReference>
<dbReference type="InterPro" id="IPR003973">
    <property type="entry name" value="K_chnl_volt-dep_Kv2"/>
</dbReference>
<dbReference type="InterPro" id="IPR004350">
    <property type="entry name" value="K_chnl_volt-dep_Kv2.1"/>
</dbReference>
<dbReference type="InterPro" id="IPR011333">
    <property type="entry name" value="SKP1/BTB/POZ_sf"/>
</dbReference>
<dbReference type="InterPro" id="IPR003131">
    <property type="entry name" value="T1-type_BTB"/>
</dbReference>
<dbReference type="InterPro" id="IPR028325">
    <property type="entry name" value="VG_K_chnl"/>
</dbReference>
<dbReference type="InterPro" id="IPR027359">
    <property type="entry name" value="Volt_channel_dom_sf"/>
</dbReference>
<dbReference type="PANTHER" id="PTHR11537:SF63">
    <property type="entry name" value="POTASSIUM VOLTAGE-GATED CHANNEL SUBFAMILY B MEMBER 1"/>
    <property type="match status" value="1"/>
</dbReference>
<dbReference type="PANTHER" id="PTHR11537">
    <property type="entry name" value="VOLTAGE-GATED POTASSIUM CHANNEL"/>
    <property type="match status" value="1"/>
</dbReference>
<dbReference type="Pfam" id="PF02214">
    <property type="entry name" value="BTB_2"/>
    <property type="match status" value="1"/>
</dbReference>
<dbReference type="Pfam" id="PF00520">
    <property type="entry name" value="Ion_trans"/>
    <property type="match status" value="1"/>
</dbReference>
<dbReference type="Pfam" id="PF03521">
    <property type="entry name" value="Kv2channel"/>
    <property type="match status" value="2"/>
</dbReference>
<dbReference type="PRINTS" id="PR00169">
    <property type="entry name" value="KCHANNEL"/>
</dbReference>
<dbReference type="PRINTS" id="PR01514">
    <property type="entry name" value="KV21CHANNEL"/>
</dbReference>
<dbReference type="PRINTS" id="PR01491">
    <property type="entry name" value="KVCHANNEL"/>
</dbReference>
<dbReference type="PRINTS" id="PR01495">
    <property type="entry name" value="SHABCHANNEL"/>
</dbReference>
<dbReference type="SMART" id="SM00225">
    <property type="entry name" value="BTB"/>
    <property type="match status" value="1"/>
</dbReference>
<dbReference type="SUPFAM" id="SSF54695">
    <property type="entry name" value="POZ domain"/>
    <property type="match status" value="1"/>
</dbReference>
<dbReference type="SUPFAM" id="SSF81324">
    <property type="entry name" value="Voltage-gated potassium channels"/>
    <property type="match status" value="1"/>
</dbReference>
<sequence>MPAGMTKHGSRSTSSLPPEPMEIVRSKACSRRVRLNVGGLAHEVLWRTLDRLPRTRLGKLRDCNTHDSLLEVCDDYSLDDNEYFFDRHPGAFTSILNFYRTGRLHMMEEMCALSFSQELDYWGIDEIYLESCCQARYHQKKEQMNEELKREAETLREREGEEFDNTCCAEKRKKLWDLLEKPNSSVAAKILAIISIMFIVLSTIALSLNTLPELQSLDEFGQTTDNPQLAHVEAVCIAWFTMEYLLRFLSSPKKWKFFKGPLNAIDLLAILPYYVTIFLTESNKSVLQFQNVRRVVQIFRIMRILRILKLARHSTGLQSLGFTLRRSYNELGLLILFLAMGIMIFSSLVFFAEKDEDDTKFKSIPASFWWATITMTTVGYGDIYPKTLLGKIVGGLCCIAGVLVIALPIPIIVNNFSEFYKEQKRQEKAIKRREALERAKRNGSIVSMNMKDAFPRSIEMMDIVVEKNVENMGQKDKVQDNHLSPNKWKWTKRTLSETSSSKSFETKEQGSPEKARSSSSPQHLNVQQLEDMYNKMAKTQSQPILNTKESATQSKPKEELEMESIPSPVAPLPTRTEGVIDMRSMSSIDSFISCATDFPEATRFSHSPLASLPSKSGGSMAPEVGWRGALGATGGRFVEANPTPDASHHSTFFIESPKSSMKTTNPLKLRALKVNFMEGDPSPLVPVLGMYHDPLRNRGGAAAAVAGLECATLLDRPVLSPESSIYTTASARTPPRSPEKHTAIAFNFEAGIHQYIDADTDDEGQVLYSVDSSPPKSLHGSTSPKFSIGTRSEKNHFESSPLPTSPKFLRQNCIYSTEALTGKAPSGQEKCKLENHISPDVRVLPGGGAHGSTRDQSI</sequence>